<reference key="1">
    <citation type="journal article" date="2008" name="Biol. Direct">
        <title>Complete genome sequence of the extremely acidophilic methanotroph isolate V4, Methylacidiphilum infernorum, a representative of the bacterial phylum Verrucomicrobia.</title>
        <authorList>
            <person name="Hou S."/>
            <person name="Makarova K.S."/>
            <person name="Saw J.H."/>
            <person name="Senin P."/>
            <person name="Ly B.V."/>
            <person name="Zhou Z."/>
            <person name="Ren Y."/>
            <person name="Wang J."/>
            <person name="Galperin M.Y."/>
            <person name="Omelchenko M.V."/>
            <person name="Wolf Y.I."/>
            <person name="Yutin N."/>
            <person name="Koonin E.V."/>
            <person name="Stott M.B."/>
            <person name="Mountain B.W."/>
            <person name="Crowe M.A."/>
            <person name="Smirnova A.V."/>
            <person name="Dunfield P.F."/>
            <person name="Feng L."/>
            <person name="Wang L."/>
            <person name="Alam M."/>
        </authorList>
    </citation>
    <scope>NUCLEOTIDE SEQUENCE [LARGE SCALE GENOMIC DNA]</scope>
    <source>
        <strain>Isolate V4</strain>
    </source>
</reference>
<accession>B3DX88</accession>
<keyword id="KW-0028">Amino-acid biosynthesis</keyword>
<keyword id="KW-0100">Branched-chain amino acid biosynthesis</keyword>
<keyword id="KW-0963">Cytoplasm</keyword>
<keyword id="KW-0432">Leucine biosynthesis</keyword>
<keyword id="KW-0464">Manganese</keyword>
<keyword id="KW-0479">Metal-binding</keyword>
<keyword id="KW-0808">Transferase</keyword>
<protein>
    <recommendedName>
        <fullName evidence="1">2-isopropylmalate synthase</fullName>
        <ecNumber evidence="1">2.3.3.13</ecNumber>
    </recommendedName>
    <alternativeName>
        <fullName evidence="1">Alpha-IPM synthase</fullName>
    </alternativeName>
    <alternativeName>
        <fullName evidence="1">Alpha-isopropylmalate synthase</fullName>
    </alternativeName>
</protein>
<comment type="function">
    <text evidence="1">Catalyzes the condensation of the acetyl group of acetyl-CoA with 3-methyl-2-oxobutanoate (2-ketoisovalerate) to form 3-carboxy-3-hydroxy-4-methylpentanoate (2-isopropylmalate).</text>
</comment>
<comment type="catalytic activity">
    <reaction evidence="1">
        <text>3-methyl-2-oxobutanoate + acetyl-CoA + H2O = (2S)-2-isopropylmalate + CoA + H(+)</text>
        <dbReference type="Rhea" id="RHEA:21524"/>
        <dbReference type="ChEBI" id="CHEBI:1178"/>
        <dbReference type="ChEBI" id="CHEBI:11851"/>
        <dbReference type="ChEBI" id="CHEBI:15377"/>
        <dbReference type="ChEBI" id="CHEBI:15378"/>
        <dbReference type="ChEBI" id="CHEBI:57287"/>
        <dbReference type="ChEBI" id="CHEBI:57288"/>
        <dbReference type="EC" id="2.3.3.13"/>
    </reaction>
</comment>
<comment type="cofactor">
    <cofactor evidence="1">
        <name>Mn(2+)</name>
        <dbReference type="ChEBI" id="CHEBI:29035"/>
    </cofactor>
</comment>
<comment type="pathway">
    <text evidence="1">Amino-acid biosynthesis; L-leucine biosynthesis; L-leucine from 3-methyl-2-oxobutanoate: step 1/4.</text>
</comment>
<comment type="subunit">
    <text evidence="1">Homodimer.</text>
</comment>
<comment type="subcellular location">
    <subcellularLocation>
        <location evidence="1">Cytoplasm</location>
    </subcellularLocation>
</comment>
<comment type="similarity">
    <text evidence="1">Belongs to the alpha-IPM synthase/homocitrate synthase family. LeuA type 1 subfamily.</text>
</comment>
<organism>
    <name type="scientific">Methylacidiphilum infernorum (isolate V4)</name>
    <name type="common">Methylokorus infernorum (strain V4)</name>
    <dbReference type="NCBI Taxonomy" id="481448"/>
    <lineage>
        <taxon>Bacteria</taxon>
        <taxon>Pseudomonadati</taxon>
        <taxon>Verrucomicrobiota</taxon>
        <taxon>Methylacidiphilae</taxon>
        <taxon>Methylacidiphilales</taxon>
        <taxon>Methylacidiphilaceae</taxon>
        <taxon>Methylacidiphilum (ex Ratnadevi et al. 2023)</taxon>
    </lineage>
</organism>
<gene>
    <name evidence="1" type="primary">leuA</name>
    <name type="ordered locus">Minf_1743</name>
</gene>
<sequence length="506" mass="55078">MEMTANRLIVFDTTLRDGEQCPGASMTSRQKLEVAKQLARLGVDVIEAGFPVISQGDFESVSEIAAQVKGPKICGLARCLPKDIEAAAEALKAAADAARIHVFLATSQIHRRFKLAKDEEEIVRIAVEGVRLAKRYVQDVEFSAEDASRTEPEFLAKIIQKVIEAGATTVNIPDTVGYAVPEEFASLIRYLFDHVQDIDKVVVSVHCHNDLGLAVSNSLAAIKAGARQVEGTINGIGERAGNAALEEIIMALHTRPDAFGKIETGIQLKEILRTSRLVSRMSGLAVQRNKAVVGENAFAHAAGIHQDGILKKRETYEIIDPKIIGWEQSELPLTKHSGRAALENRLKILGFELEKEEIDNIFSQFKQIGDKKKFIYDDDLVSLVEGQISRIKETYELEYVAVTVCSGGIPMATIKLRHGEEVLVDASTGDGAVDAAMKAVDRITGQHGHLVEYEVKSVTEGKDAIGEVTVKVNFDSKKLVTAKAASTDVIEASIKAYLNAVNKALL</sequence>
<feature type="chain" id="PRO_1000149220" description="2-isopropylmalate synthase">
    <location>
        <begin position="1"/>
        <end position="506"/>
    </location>
</feature>
<feature type="domain" description="Pyruvate carboxyltransferase" evidence="1">
    <location>
        <begin position="8"/>
        <end position="272"/>
    </location>
</feature>
<feature type="region of interest" description="Regulatory domain" evidence="1">
    <location>
        <begin position="396"/>
        <end position="506"/>
    </location>
</feature>
<feature type="binding site" evidence="1">
    <location>
        <position position="17"/>
    </location>
    <ligand>
        <name>Mn(2+)</name>
        <dbReference type="ChEBI" id="CHEBI:29035"/>
    </ligand>
</feature>
<feature type="binding site" evidence="1">
    <location>
        <position position="206"/>
    </location>
    <ligand>
        <name>Mn(2+)</name>
        <dbReference type="ChEBI" id="CHEBI:29035"/>
    </ligand>
</feature>
<feature type="binding site" evidence="1">
    <location>
        <position position="208"/>
    </location>
    <ligand>
        <name>Mn(2+)</name>
        <dbReference type="ChEBI" id="CHEBI:29035"/>
    </ligand>
</feature>
<feature type="binding site" evidence="1">
    <location>
        <position position="242"/>
    </location>
    <ligand>
        <name>Mn(2+)</name>
        <dbReference type="ChEBI" id="CHEBI:29035"/>
    </ligand>
</feature>
<evidence type="ECO:0000255" key="1">
    <source>
        <dbReference type="HAMAP-Rule" id="MF_01025"/>
    </source>
</evidence>
<name>LEU1_METI4</name>
<dbReference type="EC" id="2.3.3.13" evidence="1"/>
<dbReference type="EMBL" id="CP000975">
    <property type="protein sequence ID" value="ACD83797.1"/>
    <property type="molecule type" value="Genomic_DNA"/>
</dbReference>
<dbReference type="SMR" id="B3DX88"/>
<dbReference type="STRING" id="481448.Minf_1743"/>
<dbReference type="KEGG" id="min:Minf_1743"/>
<dbReference type="eggNOG" id="COG0119">
    <property type="taxonomic scope" value="Bacteria"/>
</dbReference>
<dbReference type="HOGENOM" id="CLU_022158_0_1_0"/>
<dbReference type="UniPathway" id="UPA00048">
    <property type="reaction ID" value="UER00070"/>
</dbReference>
<dbReference type="Proteomes" id="UP000009149">
    <property type="component" value="Chromosome"/>
</dbReference>
<dbReference type="GO" id="GO:0005737">
    <property type="term" value="C:cytoplasm"/>
    <property type="evidence" value="ECO:0007669"/>
    <property type="project" value="UniProtKB-SubCell"/>
</dbReference>
<dbReference type="GO" id="GO:0003852">
    <property type="term" value="F:2-isopropylmalate synthase activity"/>
    <property type="evidence" value="ECO:0007669"/>
    <property type="project" value="UniProtKB-UniRule"/>
</dbReference>
<dbReference type="GO" id="GO:0003985">
    <property type="term" value="F:acetyl-CoA C-acetyltransferase activity"/>
    <property type="evidence" value="ECO:0007669"/>
    <property type="project" value="UniProtKB-UniRule"/>
</dbReference>
<dbReference type="GO" id="GO:0030145">
    <property type="term" value="F:manganese ion binding"/>
    <property type="evidence" value="ECO:0007669"/>
    <property type="project" value="UniProtKB-UniRule"/>
</dbReference>
<dbReference type="GO" id="GO:0009098">
    <property type="term" value="P:L-leucine biosynthetic process"/>
    <property type="evidence" value="ECO:0007669"/>
    <property type="project" value="UniProtKB-UniRule"/>
</dbReference>
<dbReference type="CDD" id="cd07940">
    <property type="entry name" value="DRE_TIM_IPMS"/>
    <property type="match status" value="1"/>
</dbReference>
<dbReference type="FunFam" id="1.10.238.260:FF:000001">
    <property type="entry name" value="2-isopropylmalate synthase"/>
    <property type="match status" value="1"/>
</dbReference>
<dbReference type="FunFam" id="3.20.20.70:FF:000010">
    <property type="entry name" value="2-isopropylmalate synthase"/>
    <property type="match status" value="1"/>
</dbReference>
<dbReference type="Gene3D" id="1.10.238.260">
    <property type="match status" value="1"/>
</dbReference>
<dbReference type="Gene3D" id="3.30.160.270">
    <property type="match status" value="1"/>
</dbReference>
<dbReference type="Gene3D" id="3.20.20.70">
    <property type="entry name" value="Aldolase class I"/>
    <property type="match status" value="1"/>
</dbReference>
<dbReference type="HAMAP" id="MF_01025">
    <property type="entry name" value="LeuA_type1"/>
    <property type="match status" value="1"/>
</dbReference>
<dbReference type="InterPro" id="IPR050073">
    <property type="entry name" value="2-IPM_HCS-like"/>
</dbReference>
<dbReference type="InterPro" id="IPR013709">
    <property type="entry name" value="2-isopropylmalate_synth_dimer"/>
</dbReference>
<dbReference type="InterPro" id="IPR002034">
    <property type="entry name" value="AIPM/Hcit_synth_CS"/>
</dbReference>
<dbReference type="InterPro" id="IPR013785">
    <property type="entry name" value="Aldolase_TIM"/>
</dbReference>
<dbReference type="InterPro" id="IPR054691">
    <property type="entry name" value="LeuA/HCS_post-cat"/>
</dbReference>
<dbReference type="InterPro" id="IPR036230">
    <property type="entry name" value="LeuA_allosteric_dom_sf"/>
</dbReference>
<dbReference type="InterPro" id="IPR005671">
    <property type="entry name" value="LeuA_bact_synth"/>
</dbReference>
<dbReference type="InterPro" id="IPR000891">
    <property type="entry name" value="PYR_CT"/>
</dbReference>
<dbReference type="NCBIfam" id="TIGR00973">
    <property type="entry name" value="leuA_bact"/>
    <property type="match status" value="1"/>
</dbReference>
<dbReference type="NCBIfam" id="NF002085">
    <property type="entry name" value="PRK00915.1-2"/>
    <property type="match status" value="1"/>
</dbReference>
<dbReference type="NCBIfam" id="NF002086">
    <property type="entry name" value="PRK00915.1-3"/>
    <property type="match status" value="1"/>
</dbReference>
<dbReference type="PANTHER" id="PTHR10277:SF9">
    <property type="entry name" value="2-ISOPROPYLMALATE SYNTHASE 1, CHLOROPLASTIC-RELATED"/>
    <property type="match status" value="1"/>
</dbReference>
<dbReference type="PANTHER" id="PTHR10277">
    <property type="entry name" value="HOMOCITRATE SYNTHASE-RELATED"/>
    <property type="match status" value="1"/>
</dbReference>
<dbReference type="Pfam" id="PF22617">
    <property type="entry name" value="HCS_D2"/>
    <property type="match status" value="1"/>
</dbReference>
<dbReference type="Pfam" id="PF00682">
    <property type="entry name" value="HMGL-like"/>
    <property type="match status" value="1"/>
</dbReference>
<dbReference type="Pfam" id="PF08502">
    <property type="entry name" value="LeuA_dimer"/>
    <property type="match status" value="1"/>
</dbReference>
<dbReference type="SMART" id="SM00917">
    <property type="entry name" value="LeuA_dimer"/>
    <property type="match status" value="1"/>
</dbReference>
<dbReference type="SUPFAM" id="SSF110921">
    <property type="entry name" value="2-isopropylmalate synthase LeuA, allosteric (dimerisation) domain"/>
    <property type="match status" value="1"/>
</dbReference>
<dbReference type="SUPFAM" id="SSF51569">
    <property type="entry name" value="Aldolase"/>
    <property type="match status" value="1"/>
</dbReference>
<dbReference type="PROSITE" id="PS00815">
    <property type="entry name" value="AIPM_HOMOCIT_SYNTH_1"/>
    <property type="match status" value="1"/>
</dbReference>
<dbReference type="PROSITE" id="PS00816">
    <property type="entry name" value="AIPM_HOMOCIT_SYNTH_2"/>
    <property type="match status" value="1"/>
</dbReference>
<dbReference type="PROSITE" id="PS50991">
    <property type="entry name" value="PYR_CT"/>
    <property type="match status" value="1"/>
</dbReference>
<proteinExistence type="inferred from homology"/>